<reference key="1">
    <citation type="journal article" date="1999" name="Oncogene">
        <title>Metastasis-association of the rat ortholog of the human epithelial glycoprotein antigen EGP314.</title>
        <authorList>
            <person name="Wuerfel J."/>
            <person name="Roesel M."/>
            <person name="Seiter S."/>
            <person name="Claas C."/>
            <person name="Herlevsen M."/>
            <person name="Weth R."/>
            <person name="Zoeller M."/>
        </authorList>
    </citation>
    <scope>NUCLEOTIDE SEQUENCE [MRNA]</scope>
    <source>
        <strain>BDIX</strain>
        <tissue>Colon carcinoma</tissue>
    </source>
</reference>
<reference key="2">
    <citation type="submission" date="2005-07" db="EMBL/GenBank/DDBJ databases">
        <authorList>
            <person name="Mural R.J."/>
            <person name="Adams M.D."/>
            <person name="Myers E.W."/>
            <person name="Smith H.O."/>
            <person name="Venter J.C."/>
        </authorList>
    </citation>
    <scope>NUCLEOTIDE SEQUENCE [LARGE SCALE GENOMIC DNA]</scope>
</reference>
<reference key="3">
    <citation type="journal article" date="2004" name="Genome Res.">
        <title>The status, quality, and expansion of the NIH full-length cDNA project: the Mammalian Gene Collection (MGC).</title>
        <authorList>
            <consortium name="The MGC Project Team"/>
        </authorList>
    </citation>
    <scope>NUCLEOTIDE SEQUENCE [LARGE SCALE MRNA]</scope>
    <source>
        <tissue>Lung</tissue>
    </source>
</reference>
<reference key="4">
    <citation type="journal article" date="2005" name="Exp. Cell Res.">
        <title>The cell-cell adhesion molecule EpCAM interacts directly with the tight junction protein claudin-7.</title>
        <authorList>
            <person name="Ladwein M."/>
            <person name="Pape U.F."/>
            <person name="Schmidt D.S."/>
            <person name="Schnoelzer M."/>
            <person name="Fiedler S."/>
            <person name="Langbein L."/>
            <person name="Franke W.W."/>
            <person name="Moldenhauer G."/>
            <person name="Zoeller M."/>
        </authorList>
    </citation>
    <scope>SUBCELLULAR LOCATION</scope>
    <scope>INTERACTION WITH CLDN7</scope>
</reference>
<proteinExistence type="evidence at protein level"/>
<name>EPCAM_RAT</name>
<sequence>MAPPKALAFGLLLAVVTATLAAAQKDCVCNNYKLTSRCYENENGECQCTSYGTQNTVICSKLASKCLVMKAEMTHSKSGRRMKPEGAIQNNDGLYDPECDEQGLFKAKQCNGTATCWCVNTAGVRRTDKDTEITCSERVRTYWIIIELKHKERAQPYNFESLHTALQDTFASRYMLNPKFIKSIMYENNVITIDLMQNSSQKTQDDVDIADVAYYFEKDVKGESLFHSSKSMDLRVNGELLDLDPGQTLIYYVDEKAPEFSMQGLTAGIIAVIVVVVLAVIAGIVVLVISTRKRSAKYEKAEIKEMGEIHRELNA</sequence>
<protein>
    <recommendedName>
        <fullName>Epithelial cell adhesion molecule</fullName>
        <shortName>Ep-CAM</shortName>
    </recommendedName>
    <alternativeName>
        <fullName>Epithelial glycoprotein 314</fullName>
        <shortName>EGP314</shortName>
    </alternativeName>
    <alternativeName>
        <fullName>Protein D5.7A</fullName>
    </alternativeName>
    <alternativeName>
        <fullName>Tumor-associated calcium signal transducer 1</fullName>
    </alternativeName>
    <cdAntigenName>CD326</cdAntigenName>
</protein>
<accession>O55159</accession>
<dbReference type="EMBL" id="AJ001044">
    <property type="protein sequence ID" value="CAA04498.1"/>
    <property type="molecule type" value="mRNA"/>
</dbReference>
<dbReference type="EMBL" id="CH473947">
    <property type="protein sequence ID" value="EDM02636.1"/>
    <property type="molecule type" value="Genomic_DNA"/>
</dbReference>
<dbReference type="EMBL" id="BC072691">
    <property type="protein sequence ID" value="AAH72691.1"/>
    <property type="molecule type" value="mRNA"/>
</dbReference>
<dbReference type="RefSeq" id="NP_612550.1">
    <property type="nucleotide sequence ID" value="NM_138541.2"/>
</dbReference>
<dbReference type="RefSeq" id="XP_017449516.1">
    <property type="nucleotide sequence ID" value="XM_017594027.1"/>
</dbReference>
<dbReference type="SMR" id="O55159"/>
<dbReference type="FunCoup" id="O55159">
    <property type="interactions" value="99"/>
</dbReference>
<dbReference type="STRING" id="10116.ENSRNOP00000021135"/>
<dbReference type="GlyCosmos" id="O55159">
    <property type="glycosylation" value="2 sites, No reported glycans"/>
</dbReference>
<dbReference type="GlyGen" id="O55159">
    <property type="glycosylation" value="2 sites"/>
</dbReference>
<dbReference type="iPTMnet" id="O55159"/>
<dbReference type="PhosphoSitePlus" id="O55159"/>
<dbReference type="jPOST" id="O55159"/>
<dbReference type="PaxDb" id="10116-ENSRNOP00000021135"/>
<dbReference type="Ensembl" id="ENSRNOT00000021135.7">
    <property type="protein sequence ID" value="ENSRNOP00000021135.5"/>
    <property type="gene ID" value="ENSRNOG00000015667.7"/>
</dbReference>
<dbReference type="GeneID" id="171577"/>
<dbReference type="KEGG" id="rno:171577"/>
<dbReference type="UCSC" id="RGD:621365">
    <property type="organism name" value="rat"/>
</dbReference>
<dbReference type="AGR" id="RGD:621365"/>
<dbReference type="CTD" id="4072"/>
<dbReference type="RGD" id="621365">
    <property type="gene designation" value="Epcam"/>
</dbReference>
<dbReference type="eggNOG" id="ENOG502QVSU">
    <property type="taxonomic scope" value="Eukaryota"/>
</dbReference>
<dbReference type="GeneTree" id="ENSGT00390000018245"/>
<dbReference type="HOGENOM" id="CLU_075326_0_0_1"/>
<dbReference type="InParanoid" id="O55159"/>
<dbReference type="OrthoDB" id="64613at9989"/>
<dbReference type="PhylomeDB" id="O55159"/>
<dbReference type="TreeFam" id="TF332767"/>
<dbReference type="Reactome" id="R-RNO-202733">
    <property type="pathway name" value="Cell surface interactions at the vascular wall"/>
</dbReference>
<dbReference type="PRO" id="PR:O55159"/>
<dbReference type="Proteomes" id="UP000002494">
    <property type="component" value="Chromosome 6"/>
</dbReference>
<dbReference type="Proteomes" id="UP000234681">
    <property type="component" value="Chromosome 6"/>
</dbReference>
<dbReference type="Bgee" id="ENSRNOG00000015667">
    <property type="expression patterns" value="Expressed in jejunum and 19 other cell types or tissues"/>
</dbReference>
<dbReference type="GO" id="GO:0016324">
    <property type="term" value="C:apical plasma membrane"/>
    <property type="evidence" value="ECO:0000266"/>
    <property type="project" value="RGD"/>
</dbReference>
<dbReference type="GO" id="GO:0016323">
    <property type="term" value="C:basolateral plasma membrane"/>
    <property type="evidence" value="ECO:0000266"/>
    <property type="project" value="RGD"/>
</dbReference>
<dbReference type="GO" id="GO:0005923">
    <property type="term" value="C:bicellular tight junction"/>
    <property type="evidence" value="ECO:0000314"/>
    <property type="project" value="UniProtKB"/>
</dbReference>
<dbReference type="GO" id="GO:0009986">
    <property type="term" value="C:cell surface"/>
    <property type="evidence" value="ECO:0000314"/>
    <property type="project" value="RGD"/>
</dbReference>
<dbReference type="GO" id="GO:0016328">
    <property type="term" value="C:lateral plasma membrane"/>
    <property type="evidence" value="ECO:0000314"/>
    <property type="project" value="UniProtKB"/>
</dbReference>
<dbReference type="GO" id="GO:0005886">
    <property type="term" value="C:plasma membrane"/>
    <property type="evidence" value="ECO:0000266"/>
    <property type="project" value="RGD"/>
</dbReference>
<dbReference type="GO" id="GO:0098641">
    <property type="term" value="F:cadherin binding involved in cell-cell adhesion"/>
    <property type="evidence" value="ECO:0000353"/>
    <property type="project" value="RGD"/>
</dbReference>
<dbReference type="GO" id="GO:0044877">
    <property type="term" value="F:protein-containing complex binding"/>
    <property type="evidence" value="ECO:0000266"/>
    <property type="project" value="RGD"/>
</dbReference>
<dbReference type="GO" id="GO:0098742">
    <property type="term" value="P:cell-cell adhesion via plasma-membrane adhesion molecules"/>
    <property type="evidence" value="ECO:0000314"/>
    <property type="project" value="RGD"/>
</dbReference>
<dbReference type="GO" id="GO:0043066">
    <property type="term" value="P:negative regulation of apoptotic process"/>
    <property type="evidence" value="ECO:0000314"/>
    <property type="project" value="RGD"/>
</dbReference>
<dbReference type="GO" id="GO:2000048">
    <property type="term" value="P:negative regulation of cell-cell adhesion mediated by cadherin"/>
    <property type="evidence" value="ECO:0000266"/>
    <property type="project" value="RGD"/>
</dbReference>
<dbReference type="GO" id="GO:2000147">
    <property type="term" value="P:positive regulation of cell motility"/>
    <property type="evidence" value="ECO:0000314"/>
    <property type="project" value="RGD"/>
</dbReference>
<dbReference type="GO" id="GO:0008284">
    <property type="term" value="P:positive regulation of cell population proliferation"/>
    <property type="evidence" value="ECO:0000250"/>
    <property type="project" value="UniProtKB"/>
</dbReference>
<dbReference type="GO" id="GO:2000648">
    <property type="term" value="P:positive regulation of stem cell proliferation"/>
    <property type="evidence" value="ECO:0000266"/>
    <property type="project" value="RGD"/>
</dbReference>
<dbReference type="GO" id="GO:0045944">
    <property type="term" value="P:positive regulation of transcription by RNA polymerase II"/>
    <property type="evidence" value="ECO:0000266"/>
    <property type="project" value="RGD"/>
</dbReference>
<dbReference type="GO" id="GO:0023019">
    <property type="term" value="P:signal transduction involved in regulation of gene expression"/>
    <property type="evidence" value="ECO:0000266"/>
    <property type="project" value="RGD"/>
</dbReference>
<dbReference type="GO" id="GO:0048863">
    <property type="term" value="P:stem cell differentiation"/>
    <property type="evidence" value="ECO:0000266"/>
    <property type="project" value="RGD"/>
</dbReference>
<dbReference type="GO" id="GO:0001657">
    <property type="term" value="P:ureteric bud development"/>
    <property type="evidence" value="ECO:0000266"/>
    <property type="project" value="RGD"/>
</dbReference>
<dbReference type="CDD" id="cd00191">
    <property type="entry name" value="TY"/>
    <property type="match status" value="1"/>
</dbReference>
<dbReference type="FunFam" id="4.10.800.10:FF:000015">
    <property type="entry name" value="Epithelial cell adhesion molecule"/>
    <property type="match status" value="1"/>
</dbReference>
<dbReference type="Gene3D" id="4.10.800.10">
    <property type="entry name" value="Thyroglobulin type-1"/>
    <property type="match status" value="1"/>
</dbReference>
<dbReference type="InterPro" id="IPR049420">
    <property type="entry name" value="EPCAM-Trop-2_C"/>
</dbReference>
<dbReference type="InterPro" id="IPR043406">
    <property type="entry name" value="EPCAM/Trop-2"/>
</dbReference>
<dbReference type="InterPro" id="IPR041630">
    <property type="entry name" value="EpCAM_N"/>
</dbReference>
<dbReference type="InterPro" id="IPR000716">
    <property type="entry name" value="Thyroglobulin_1"/>
</dbReference>
<dbReference type="InterPro" id="IPR036857">
    <property type="entry name" value="Thyroglobulin_1_sf"/>
</dbReference>
<dbReference type="PANTHER" id="PTHR14168:SF2">
    <property type="entry name" value="EPITHELIAL CELL ADHESION MOLECULE"/>
    <property type="match status" value="1"/>
</dbReference>
<dbReference type="PANTHER" id="PTHR14168">
    <property type="entry name" value="TUMOR-ASSOCIATED CALCIUM SIGNAL TRANSDUCER"/>
    <property type="match status" value="1"/>
</dbReference>
<dbReference type="Pfam" id="PF21283">
    <property type="entry name" value="EPCAM-Trop-2_C"/>
    <property type="match status" value="1"/>
</dbReference>
<dbReference type="Pfam" id="PF18635">
    <property type="entry name" value="EpCAM_N"/>
    <property type="match status" value="1"/>
</dbReference>
<dbReference type="Pfam" id="PF00086">
    <property type="entry name" value="Thyroglobulin_1"/>
    <property type="match status" value="1"/>
</dbReference>
<dbReference type="SMART" id="SM00211">
    <property type="entry name" value="TY"/>
    <property type="match status" value="1"/>
</dbReference>
<dbReference type="SUPFAM" id="SSF57610">
    <property type="entry name" value="Thyroglobulin type-1 domain"/>
    <property type="match status" value="1"/>
</dbReference>
<dbReference type="PROSITE" id="PS00484">
    <property type="entry name" value="THYROGLOBULIN_1_1"/>
    <property type="match status" value="1"/>
</dbReference>
<dbReference type="PROSITE" id="PS51162">
    <property type="entry name" value="THYROGLOBULIN_1_2"/>
    <property type="match status" value="1"/>
</dbReference>
<evidence type="ECO:0000250" key="1"/>
<evidence type="ECO:0000255" key="2"/>
<evidence type="ECO:0000255" key="3">
    <source>
        <dbReference type="PROSITE-ProRule" id="PRU00500"/>
    </source>
</evidence>
<evidence type="ECO:0000269" key="4">
    <source>
    </source>
</evidence>
<evidence type="ECO:0000305" key="5"/>
<gene>
    <name type="primary">Epcam</name>
    <name type="synonym">Tacstd1</name>
</gene>
<keyword id="KW-0965">Cell junction</keyword>
<keyword id="KW-1003">Cell membrane</keyword>
<keyword id="KW-1015">Disulfide bond</keyword>
<keyword id="KW-0325">Glycoprotein</keyword>
<keyword id="KW-0472">Membrane</keyword>
<keyword id="KW-1185">Reference proteome</keyword>
<keyword id="KW-0677">Repeat</keyword>
<keyword id="KW-0732">Signal</keyword>
<keyword id="KW-0796">Tight junction</keyword>
<keyword id="KW-0812">Transmembrane</keyword>
<keyword id="KW-1133">Transmembrane helix</keyword>
<comment type="function">
    <text evidence="1">May act as a physical homophilic interaction molecule between intestinal epithelial cells (IECs) and intraepithelial lymphocytes (IELs) at the mucosal epithelium for providing immunological barrier as a first line of defense against mucosal infection. Plays a role in embryonic stem cells proliferation and differentiation. Up-regulates the expression of FABP5, MYC and cyclins A and E (By similarity).</text>
</comment>
<comment type="subunit">
    <text evidence="1">Monomer (By similarity). Interacts with phosphorylated CLDN7.</text>
</comment>
<comment type="subcellular location">
    <subcellularLocation>
        <location evidence="4">Lateral cell membrane</location>
        <topology evidence="4">Single-pass type I membrane protein</topology>
    </subcellularLocation>
    <subcellularLocation>
        <location evidence="4">Cell junction</location>
        <location evidence="4">Tight junction</location>
    </subcellularLocation>
    <text evidence="4">Colocalizes with CLDN7 at the lateral cell membrane and tight junction.</text>
</comment>
<comment type="PTM">
    <text evidence="1">Glycosylation at Asn-198 is crucial for protein stability.</text>
</comment>
<comment type="similarity">
    <text evidence="5">Belongs to the EPCAM family.</text>
</comment>
<feature type="signal peptide" evidence="2">
    <location>
        <begin position="1"/>
        <end position="23"/>
    </location>
</feature>
<feature type="chain" id="PRO_0000380185" description="Epithelial cell adhesion molecule">
    <location>
        <begin position="24"/>
        <end position="315"/>
    </location>
</feature>
<feature type="topological domain" description="Extracellular" evidence="2">
    <location>
        <begin position="24"/>
        <end position="266"/>
    </location>
</feature>
<feature type="transmembrane region" description="Helical" evidence="2">
    <location>
        <begin position="267"/>
        <end position="289"/>
    </location>
</feature>
<feature type="topological domain" description="Cytoplasmic" evidence="2">
    <location>
        <begin position="290"/>
        <end position="315"/>
    </location>
</feature>
<feature type="domain" description="Thyroglobulin type-1" evidence="3">
    <location>
        <begin position="63"/>
        <end position="135"/>
    </location>
</feature>
<feature type="glycosylation site" description="N-linked (GlcNAc...) asparagine" evidence="2">
    <location>
        <position position="111"/>
    </location>
</feature>
<feature type="glycosylation site" description="N-linked (GlcNAc...) asparagine" evidence="2">
    <location>
        <position position="198"/>
    </location>
</feature>
<feature type="disulfide bond" evidence="3">
    <location>
        <begin position="27"/>
        <end position="46"/>
    </location>
</feature>
<feature type="disulfide bond" evidence="3">
    <location>
        <begin position="29"/>
        <end position="59"/>
    </location>
</feature>
<feature type="disulfide bond" evidence="3">
    <location>
        <begin position="38"/>
        <end position="48"/>
    </location>
</feature>
<feature type="disulfide bond" evidence="3">
    <location>
        <begin position="66"/>
        <end position="99"/>
    </location>
</feature>
<feature type="disulfide bond" evidence="3">
    <location>
        <begin position="110"/>
        <end position="116"/>
    </location>
</feature>
<feature type="disulfide bond" evidence="3">
    <location>
        <begin position="118"/>
        <end position="135"/>
    </location>
</feature>
<organism>
    <name type="scientific">Rattus norvegicus</name>
    <name type="common">Rat</name>
    <dbReference type="NCBI Taxonomy" id="10116"/>
    <lineage>
        <taxon>Eukaryota</taxon>
        <taxon>Metazoa</taxon>
        <taxon>Chordata</taxon>
        <taxon>Craniata</taxon>
        <taxon>Vertebrata</taxon>
        <taxon>Euteleostomi</taxon>
        <taxon>Mammalia</taxon>
        <taxon>Eutheria</taxon>
        <taxon>Euarchontoglires</taxon>
        <taxon>Glires</taxon>
        <taxon>Rodentia</taxon>
        <taxon>Myomorpha</taxon>
        <taxon>Muroidea</taxon>
        <taxon>Muridae</taxon>
        <taxon>Murinae</taxon>
        <taxon>Rattus</taxon>
    </lineage>
</organism>